<feature type="chain" id="PRO_0000146353" description="Small ribosomal subunit protein uS12">
    <location>
        <begin position="1"/>
        <end position="124"/>
    </location>
</feature>
<feature type="modified residue" description="3-methylthioaspartic acid" evidence="1">
    <location>
        <position position="89"/>
    </location>
</feature>
<accession>Q7MH40</accession>
<reference key="1">
    <citation type="journal article" date="2003" name="Genome Res.">
        <title>Comparative genome analysis of Vibrio vulnificus, a marine pathogen.</title>
        <authorList>
            <person name="Chen C.-Y."/>
            <person name="Wu K.-M."/>
            <person name="Chang Y.-C."/>
            <person name="Chang C.-H."/>
            <person name="Tsai H.-C."/>
            <person name="Liao T.-L."/>
            <person name="Liu Y.-M."/>
            <person name="Chen H.-J."/>
            <person name="Shen A.B.-T."/>
            <person name="Li J.-C."/>
            <person name="Su T.-L."/>
            <person name="Shao C.-P."/>
            <person name="Lee C.-T."/>
            <person name="Hor L.-I."/>
            <person name="Tsai S.-F."/>
        </authorList>
    </citation>
    <scope>NUCLEOTIDE SEQUENCE [LARGE SCALE GENOMIC DNA]</scope>
    <source>
        <strain>YJ016</strain>
    </source>
</reference>
<sequence length="124" mass="13708">MATINQLVRKPRAKQVVKSNVPALEACPQKRGVCTRVYTTTPKKPNSALRKVCRVRLTNGFEVTSYIGGEGHNLQEHSVVLIRGGRVKDLPGVRYHTVRGALDCAGVNNRKQGRSKYGVKRPKS</sequence>
<keyword id="KW-0488">Methylation</keyword>
<keyword id="KW-0687">Ribonucleoprotein</keyword>
<keyword id="KW-0689">Ribosomal protein</keyword>
<keyword id="KW-0694">RNA-binding</keyword>
<keyword id="KW-0699">rRNA-binding</keyword>
<keyword id="KW-0820">tRNA-binding</keyword>
<proteinExistence type="inferred from homology"/>
<name>RS12_VIBVY</name>
<evidence type="ECO:0000250" key="1"/>
<evidence type="ECO:0000255" key="2">
    <source>
        <dbReference type="HAMAP-Rule" id="MF_00403"/>
    </source>
</evidence>
<evidence type="ECO:0000305" key="3"/>
<comment type="function">
    <text evidence="2">With S4 and S5 plays an important role in translational accuracy.</text>
</comment>
<comment type="function">
    <text evidence="2">Interacts with and stabilizes bases of the 16S rRNA that are involved in tRNA selection in the A site and with the mRNA backbone. Located at the interface of the 30S and 50S subunits, it traverses the body of the 30S subunit contacting proteins on the other side and probably holding the rRNA structure together. The combined cluster of proteins S8, S12 and S17 appears to hold together the shoulder and platform of the 30S subunit.</text>
</comment>
<comment type="subunit">
    <text evidence="2">Part of the 30S ribosomal subunit. Contacts proteins S8 and S17. May interact with IF1 in the 30S initiation complex.</text>
</comment>
<comment type="similarity">
    <text evidence="2">Belongs to the universal ribosomal protein uS12 family.</text>
</comment>
<gene>
    <name evidence="2" type="primary">rpsL</name>
    <name type="ordered locus">VV3032</name>
</gene>
<protein>
    <recommendedName>
        <fullName evidence="2">Small ribosomal subunit protein uS12</fullName>
    </recommendedName>
    <alternativeName>
        <fullName evidence="3">30S ribosomal protein S12</fullName>
    </alternativeName>
</protein>
<organism>
    <name type="scientific">Vibrio vulnificus (strain YJ016)</name>
    <dbReference type="NCBI Taxonomy" id="196600"/>
    <lineage>
        <taxon>Bacteria</taxon>
        <taxon>Pseudomonadati</taxon>
        <taxon>Pseudomonadota</taxon>
        <taxon>Gammaproteobacteria</taxon>
        <taxon>Vibrionales</taxon>
        <taxon>Vibrionaceae</taxon>
        <taxon>Vibrio</taxon>
    </lineage>
</organism>
<dbReference type="EMBL" id="BA000037">
    <property type="protein sequence ID" value="BAC95796.1"/>
    <property type="molecule type" value="Genomic_DNA"/>
</dbReference>
<dbReference type="RefSeq" id="WP_011079315.1">
    <property type="nucleotide sequence ID" value="NC_005139.1"/>
</dbReference>
<dbReference type="SMR" id="Q7MH40"/>
<dbReference type="STRING" id="672.VV93_v1c27600"/>
<dbReference type="GeneID" id="93895604"/>
<dbReference type="KEGG" id="vvy:VV3032"/>
<dbReference type="eggNOG" id="COG0048">
    <property type="taxonomic scope" value="Bacteria"/>
</dbReference>
<dbReference type="HOGENOM" id="CLU_104295_1_2_6"/>
<dbReference type="Proteomes" id="UP000002675">
    <property type="component" value="Chromosome I"/>
</dbReference>
<dbReference type="GO" id="GO:0015935">
    <property type="term" value="C:small ribosomal subunit"/>
    <property type="evidence" value="ECO:0007669"/>
    <property type="project" value="InterPro"/>
</dbReference>
<dbReference type="GO" id="GO:0019843">
    <property type="term" value="F:rRNA binding"/>
    <property type="evidence" value="ECO:0007669"/>
    <property type="project" value="UniProtKB-UniRule"/>
</dbReference>
<dbReference type="GO" id="GO:0003735">
    <property type="term" value="F:structural constituent of ribosome"/>
    <property type="evidence" value="ECO:0007669"/>
    <property type="project" value="InterPro"/>
</dbReference>
<dbReference type="GO" id="GO:0000049">
    <property type="term" value="F:tRNA binding"/>
    <property type="evidence" value="ECO:0007669"/>
    <property type="project" value="UniProtKB-UniRule"/>
</dbReference>
<dbReference type="GO" id="GO:0006412">
    <property type="term" value="P:translation"/>
    <property type="evidence" value="ECO:0007669"/>
    <property type="project" value="UniProtKB-UniRule"/>
</dbReference>
<dbReference type="CDD" id="cd03368">
    <property type="entry name" value="Ribosomal_S12"/>
    <property type="match status" value="1"/>
</dbReference>
<dbReference type="FunFam" id="2.40.50.140:FF:000001">
    <property type="entry name" value="30S ribosomal protein S12"/>
    <property type="match status" value="1"/>
</dbReference>
<dbReference type="Gene3D" id="2.40.50.140">
    <property type="entry name" value="Nucleic acid-binding proteins"/>
    <property type="match status" value="1"/>
</dbReference>
<dbReference type="HAMAP" id="MF_00403_B">
    <property type="entry name" value="Ribosomal_uS12_B"/>
    <property type="match status" value="1"/>
</dbReference>
<dbReference type="InterPro" id="IPR012340">
    <property type="entry name" value="NA-bd_OB-fold"/>
</dbReference>
<dbReference type="InterPro" id="IPR006032">
    <property type="entry name" value="Ribosomal_uS12"/>
</dbReference>
<dbReference type="InterPro" id="IPR005679">
    <property type="entry name" value="Ribosomal_uS12_bac"/>
</dbReference>
<dbReference type="NCBIfam" id="TIGR00981">
    <property type="entry name" value="rpsL_bact"/>
    <property type="match status" value="1"/>
</dbReference>
<dbReference type="PANTHER" id="PTHR11652">
    <property type="entry name" value="30S RIBOSOMAL PROTEIN S12 FAMILY MEMBER"/>
    <property type="match status" value="1"/>
</dbReference>
<dbReference type="Pfam" id="PF00164">
    <property type="entry name" value="Ribosom_S12_S23"/>
    <property type="match status" value="1"/>
</dbReference>
<dbReference type="PIRSF" id="PIRSF002133">
    <property type="entry name" value="Ribosomal_S12/S23"/>
    <property type="match status" value="1"/>
</dbReference>
<dbReference type="PRINTS" id="PR01034">
    <property type="entry name" value="RIBOSOMALS12"/>
</dbReference>
<dbReference type="SUPFAM" id="SSF50249">
    <property type="entry name" value="Nucleic acid-binding proteins"/>
    <property type="match status" value="1"/>
</dbReference>
<dbReference type="PROSITE" id="PS00055">
    <property type="entry name" value="RIBOSOMAL_S12"/>
    <property type="match status" value="1"/>
</dbReference>